<reference key="1">
    <citation type="journal article" date="2004" name="Plant J.">
        <title>Definition and interactions of a positive regulatory element of the Arabidopsis INNER NO OUTER promoter.</title>
        <authorList>
            <person name="Meister R.J."/>
            <person name="Williams L.A."/>
            <person name="Monfared M.M."/>
            <person name="Gallagher T.L."/>
            <person name="Kraft E.A."/>
            <person name="Nelson C.G."/>
            <person name="Gasser C.S."/>
        </authorList>
    </citation>
    <scope>NUCLEOTIDE SEQUENCE [MRNA]</scope>
    <scope>FUNCTION</scope>
    <scope>DNA-BINDING</scope>
    <scope>TISSUE SPECIFICITY</scope>
    <source>
        <strain>cv. Landsberg erecta</strain>
    </source>
</reference>
<reference key="2">
    <citation type="journal article" date="2000" name="Nature">
        <title>Sequence and analysis of chromosome 1 of the plant Arabidopsis thaliana.</title>
        <authorList>
            <person name="Theologis A."/>
            <person name="Ecker J.R."/>
            <person name="Palm C.J."/>
            <person name="Federspiel N.A."/>
            <person name="Kaul S."/>
            <person name="White O."/>
            <person name="Alonso J."/>
            <person name="Altafi H."/>
            <person name="Araujo R."/>
            <person name="Bowman C.L."/>
            <person name="Brooks S.Y."/>
            <person name="Buehler E."/>
            <person name="Chan A."/>
            <person name="Chao Q."/>
            <person name="Chen H."/>
            <person name="Cheuk R.F."/>
            <person name="Chin C.W."/>
            <person name="Chung M.K."/>
            <person name="Conn L."/>
            <person name="Conway A.B."/>
            <person name="Conway A.R."/>
            <person name="Creasy T.H."/>
            <person name="Dewar K."/>
            <person name="Dunn P."/>
            <person name="Etgu P."/>
            <person name="Feldblyum T.V."/>
            <person name="Feng J.-D."/>
            <person name="Fong B."/>
            <person name="Fujii C.Y."/>
            <person name="Gill J.E."/>
            <person name="Goldsmith A.D."/>
            <person name="Haas B."/>
            <person name="Hansen N.F."/>
            <person name="Hughes B."/>
            <person name="Huizar L."/>
            <person name="Hunter J.L."/>
            <person name="Jenkins J."/>
            <person name="Johnson-Hopson C."/>
            <person name="Khan S."/>
            <person name="Khaykin E."/>
            <person name="Kim C.J."/>
            <person name="Koo H.L."/>
            <person name="Kremenetskaia I."/>
            <person name="Kurtz D.B."/>
            <person name="Kwan A."/>
            <person name="Lam B."/>
            <person name="Langin-Hooper S."/>
            <person name="Lee A."/>
            <person name="Lee J.M."/>
            <person name="Lenz C.A."/>
            <person name="Li J.H."/>
            <person name="Li Y.-P."/>
            <person name="Lin X."/>
            <person name="Liu S.X."/>
            <person name="Liu Z.A."/>
            <person name="Luros J.S."/>
            <person name="Maiti R."/>
            <person name="Marziali A."/>
            <person name="Militscher J."/>
            <person name="Miranda M."/>
            <person name="Nguyen M."/>
            <person name="Nierman W.C."/>
            <person name="Osborne B.I."/>
            <person name="Pai G."/>
            <person name="Peterson J."/>
            <person name="Pham P.K."/>
            <person name="Rizzo M."/>
            <person name="Rooney T."/>
            <person name="Rowley D."/>
            <person name="Sakano H."/>
            <person name="Salzberg S.L."/>
            <person name="Schwartz J.R."/>
            <person name="Shinn P."/>
            <person name="Southwick A.M."/>
            <person name="Sun H."/>
            <person name="Tallon L.J."/>
            <person name="Tambunga G."/>
            <person name="Toriumi M.J."/>
            <person name="Town C.D."/>
            <person name="Utterback T."/>
            <person name="Van Aken S."/>
            <person name="Vaysberg M."/>
            <person name="Vysotskaia V.S."/>
            <person name="Walker M."/>
            <person name="Wu D."/>
            <person name="Yu G."/>
            <person name="Fraser C.M."/>
            <person name="Venter J.C."/>
            <person name="Davis R.W."/>
        </authorList>
    </citation>
    <scope>NUCLEOTIDE SEQUENCE [LARGE SCALE GENOMIC DNA]</scope>
    <source>
        <strain>cv. Columbia</strain>
    </source>
</reference>
<reference key="3">
    <citation type="journal article" date="2017" name="Plant J.">
        <title>Araport11: a complete reannotation of the Arabidopsis thaliana reference genome.</title>
        <authorList>
            <person name="Cheng C.Y."/>
            <person name="Krishnakumar V."/>
            <person name="Chan A.P."/>
            <person name="Thibaud-Nissen F."/>
            <person name="Schobel S."/>
            <person name="Town C.D."/>
        </authorList>
    </citation>
    <scope>GENOME REANNOTATION</scope>
    <source>
        <strain>cv. Columbia</strain>
    </source>
</reference>
<reference key="4">
    <citation type="submission" date="2005-05" db="EMBL/GenBank/DDBJ databases">
        <title>Arabidopsis cDNA clones.</title>
        <authorList>
            <person name="Shinn P."/>
            <person name="Chen H."/>
            <person name="Cheuk R.F."/>
            <person name="Kim C.J."/>
            <person name="Ecker J.R."/>
        </authorList>
    </citation>
    <scope>NUCLEOTIDE SEQUENCE [LARGE SCALE MRNA]</scope>
    <source>
        <strain>cv. Columbia</strain>
    </source>
</reference>
<reference key="5">
    <citation type="book" date="2009" name="Proceedings of the 20th international conference on Arabidopsis research">
        <title>The plant specific BPC/BBR family of GAGA-repeat binding proteins.</title>
        <authorList>
            <person name="Bloss U."/>
            <person name="Hohenstatt M.L."/>
            <person name="Hummel S."/>
            <person name="Harter K."/>
            <person name="Wanke D."/>
        </authorList>
    </citation>
    <scope>GENE FAMILY</scope>
</reference>
<reference key="6">
    <citation type="journal article" date="2011" name="Plant J.">
        <title>Overlapping and antagonistic activities of BASIC PENTACYSTEINE genes affect a range of developmental processes in Arabidopsis.</title>
        <authorList>
            <person name="Monfared M.M."/>
            <person name="Simon M.K."/>
            <person name="Meister R.J."/>
            <person name="Roig-Villanova I."/>
            <person name="Kooiker M."/>
            <person name="Colombo L."/>
            <person name="Fletcher J.C."/>
            <person name="Gasser C.S."/>
        </authorList>
    </citation>
    <scope>TISSUE SPECIFICITY</scope>
</reference>
<keyword id="KW-0238">DNA-binding</keyword>
<keyword id="KW-0539">Nucleus</keyword>
<keyword id="KW-1185">Reference proteome</keyword>
<keyword id="KW-0804">Transcription</keyword>
<keyword id="KW-0805">Transcription regulation</keyword>
<accession>Q9C9X6</accession>
<accession>Q500V0</accession>
<dbReference type="EMBL" id="AY380569">
    <property type="protein sequence ID" value="AAR25823.1"/>
    <property type="molecule type" value="mRNA"/>
</dbReference>
<dbReference type="EMBL" id="AC012563">
    <property type="protein sequence ID" value="AAG52002.1"/>
    <property type="molecule type" value="Genomic_DNA"/>
</dbReference>
<dbReference type="EMBL" id="CP002684">
    <property type="protein sequence ID" value="AEE34751.2"/>
    <property type="molecule type" value="Genomic_DNA"/>
</dbReference>
<dbReference type="EMBL" id="BT022117">
    <property type="protein sequence ID" value="AAY34178.1"/>
    <property type="status" value="ALT_INIT"/>
    <property type="molecule type" value="mRNA"/>
</dbReference>
<dbReference type="PIR" id="E96704">
    <property type="entry name" value="E96704"/>
</dbReference>
<dbReference type="RefSeq" id="NP_176979.3">
    <property type="nucleotide sequence ID" value="NM_105482.4"/>
</dbReference>
<dbReference type="BioGRID" id="28361">
    <property type="interactions" value="2"/>
</dbReference>
<dbReference type="STRING" id="3702.Q9C9X6"/>
<dbReference type="iPTMnet" id="Q9C9X6"/>
<dbReference type="PaxDb" id="3702-AT1G68120.1"/>
<dbReference type="EnsemblPlants" id="AT1G68120.1">
    <property type="protein sequence ID" value="AT1G68120.1"/>
    <property type="gene ID" value="AT1G68120"/>
</dbReference>
<dbReference type="GeneID" id="843140"/>
<dbReference type="Gramene" id="AT1G68120.1">
    <property type="protein sequence ID" value="AT1G68120.1"/>
    <property type="gene ID" value="AT1G68120"/>
</dbReference>
<dbReference type="KEGG" id="ath:AT1G68120"/>
<dbReference type="Araport" id="AT1G68120"/>
<dbReference type="TAIR" id="AT1G68120">
    <property type="gene designation" value="BPC3"/>
</dbReference>
<dbReference type="eggNOG" id="ENOG502QRPH">
    <property type="taxonomic scope" value="Eukaryota"/>
</dbReference>
<dbReference type="HOGENOM" id="CLU_039119_2_0_1"/>
<dbReference type="InParanoid" id="Q9C9X6"/>
<dbReference type="OMA" id="NRNWGYY"/>
<dbReference type="PRO" id="PR:Q9C9X6"/>
<dbReference type="Proteomes" id="UP000006548">
    <property type="component" value="Chromosome 1"/>
</dbReference>
<dbReference type="ExpressionAtlas" id="Q9C9X6">
    <property type="expression patterns" value="baseline and differential"/>
</dbReference>
<dbReference type="GO" id="GO:0005634">
    <property type="term" value="C:nucleus"/>
    <property type="evidence" value="ECO:0007669"/>
    <property type="project" value="UniProtKB-SubCell"/>
</dbReference>
<dbReference type="GO" id="GO:0003677">
    <property type="term" value="F:DNA binding"/>
    <property type="evidence" value="ECO:0007669"/>
    <property type="project" value="UniProtKB-KW"/>
</dbReference>
<dbReference type="InterPro" id="IPR010409">
    <property type="entry name" value="GAGA-bd_tscrpt_act"/>
</dbReference>
<dbReference type="PANTHER" id="PTHR31421">
    <property type="entry name" value="PROTEIN BASIC PENTACYSTEINE3"/>
    <property type="match status" value="1"/>
</dbReference>
<dbReference type="PANTHER" id="PTHR31421:SF22">
    <property type="entry name" value="PROTEIN BASIC PENTACYSTEINE3"/>
    <property type="match status" value="1"/>
</dbReference>
<dbReference type="Pfam" id="PF06217">
    <property type="entry name" value="GAGA_bind"/>
    <property type="match status" value="1"/>
</dbReference>
<dbReference type="SMART" id="SM01226">
    <property type="entry name" value="GAGA_bind"/>
    <property type="match status" value="1"/>
</dbReference>
<proteinExistence type="evidence at protein level"/>
<protein>
    <recommendedName>
        <fullName>Protein BASIC PENTACYSTEINE3</fullName>
        <shortName>AtBPC3</shortName>
    </recommendedName>
</protein>
<organism>
    <name type="scientific">Arabidopsis thaliana</name>
    <name type="common">Mouse-ear cress</name>
    <dbReference type="NCBI Taxonomy" id="3702"/>
    <lineage>
        <taxon>Eukaryota</taxon>
        <taxon>Viridiplantae</taxon>
        <taxon>Streptophyta</taxon>
        <taxon>Embryophyta</taxon>
        <taxon>Tracheophyta</taxon>
        <taxon>Spermatophyta</taxon>
        <taxon>Magnoliopsida</taxon>
        <taxon>eudicotyledons</taxon>
        <taxon>Gunneridae</taxon>
        <taxon>Pentapetalae</taxon>
        <taxon>rosids</taxon>
        <taxon>malvids</taxon>
        <taxon>Brassicales</taxon>
        <taxon>Brassicaceae</taxon>
        <taxon>Camelineae</taxon>
        <taxon>Arabidopsis</taxon>
    </lineage>
</organism>
<gene>
    <name type="primary">BPC3</name>
    <name type="ordered locus">At1g68120</name>
    <name type="ORF">T23K23.3</name>
</gene>
<evidence type="ECO:0000250" key="1"/>
<evidence type="ECO:0000269" key="2">
    <source>
    </source>
</evidence>
<evidence type="ECO:0000269" key="3">
    <source>
    </source>
</evidence>
<evidence type="ECO:0000305" key="4"/>
<name>BPC3_ARATH</name>
<sequence length="269" mass="30392">MEEDGLNNRNWGYYEPSQFRPNLGFQLIPSILDRNEKPFLSPHSQNLNFITPSNVYGGGSSSVVSYPRDYTVSDAPFMSYSWLNQHKDSKFFSNVPEVSRMTQSMQLLQPEVVTEVDESVKRRHCSGGQRGGVPKVKKEKKLKDNNMPRVQRERSPLLRKCIEMVINGVSMDIGGLPVPVCSCTGMPQQCYRWGCGGWQSACCTTNVSMYPLPVNTKRRGARIAGRKMSQGAFRKVLEKLSSDGFDFSNPIDLKSHWAKHGTNKFVTIR</sequence>
<comment type="function">
    <text evidence="2">Transcriptional regulator that specifically binds to GA-rich elements (GAGA-repeats) present in regulatory sequences of genes involved in developmental processes.</text>
</comment>
<comment type="subcellular location">
    <subcellularLocation>
        <location evidence="1">Nucleus</location>
    </subcellularLocation>
</comment>
<comment type="tissue specificity">
    <text evidence="2 3">Expressed in seedlings, leaves and pistils. Detected in the base of flowers and tips of carpels, in petal vasculature, in anthers, in young rosette, in the lateral and primary roots, and in the gynobasal portion of the ovule.</text>
</comment>
<comment type="similarity">
    <text evidence="4">Belongs to the BBR/BPC family.</text>
</comment>
<comment type="sequence caution" evidence="4">
    <conflict type="erroneous initiation">
        <sequence resource="EMBL-CDS" id="AAY34178"/>
    </conflict>
    <text>Extended N-terminus.</text>
</comment>
<feature type="chain" id="PRO_0000413437" description="Protein BASIC PENTACYSTEINE3">
    <location>
        <begin position="1"/>
        <end position="269"/>
    </location>
</feature>